<name>ACPS_STRZP</name>
<comment type="function">
    <text evidence="1">Transfers the 4'-phosphopantetheine moiety from coenzyme A to a Ser of acyl-carrier-protein.</text>
</comment>
<comment type="catalytic activity">
    <reaction evidence="1">
        <text>apo-[ACP] + CoA = holo-[ACP] + adenosine 3',5'-bisphosphate + H(+)</text>
        <dbReference type="Rhea" id="RHEA:12068"/>
        <dbReference type="Rhea" id="RHEA-COMP:9685"/>
        <dbReference type="Rhea" id="RHEA-COMP:9690"/>
        <dbReference type="ChEBI" id="CHEBI:15378"/>
        <dbReference type="ChEBI" id="CHEBI:29999"/>
        <dbReference type="ChEBI" id="CHEBI:57287"/>
        <dbReference type="ChEBI" id="CHEBI:58343"/>
        <dbReference type="ChEBI" id="CHEBI:64479"/>
        <dbReference type="EC" id="2.7.8.7"/>
    </reaction>
</comment>
<comment type="cofactor">
    <cofactor evidence="1">
        <name>Mg(2+)</name>
        <dbReference type="ChEBI" id="CHEBI:18420"/>
    </cofactor>
</comment>
<comment type="subcellular location">
    <subcellularLocation>
        <location evidence="1">Cytoplasm</location>
    </subcellularLocation>
</comment>
<comment type="similarity">
    <text evidence="1">Belongs to the P-Pant transferase superfamily. AcpS family.</text>
</comment>
<evidence type="ECO:0000255" key="1">
    <source>
        <dbReference type="HAMAP-Rule" id="MF_00101"/>
    </source>
</evidence>
<feature type="chain" id="PRO_1000118831" description="Holo-[acyl-carrier-protein] synthase">
    <location>
        <begin position="1"/>
        <end position="120"/>
    </location>
</feature>
<feature type="binding site" evidence="1">
    <location>
        <position position="8"/>
    </location>
    <ligand>
        <name>Mg(2+)</name>
        <dbReference type="ChEBI" id="CHEBI:18420"/>
    </ligand>
</feature>
<feature type="binding site" evidence="1">
    <location>
        <position position="58"/>
    </location>
    <ligand>
        <name>Mg(2+)</name>
        <dbReference type="ChEBI" id="CHEBI:18420"/>
    </ligand>
</feature>
<reference key="1">
    <citation type="journal article" date="2010" name="Genome Biol.">
        <title>Structure and dynamics of the pan-genome of Streptococcus pneumoniae and closely related species.</title>
        <authorList>
            <person name="Donati C."/>
            <person name="Hiller N.L."/>
            <person name="Tettelin H."/>
            <person name="Muzzi A."/>
            <person name="Croucher N.J."/>
            <person name="Angiuoli S.V."/>
            <person name="Oggioni M."/>
            <person name="Dunning Hotopp J.C."/>
            <person name="Hu F.Z."/>
            <person name="Riley D.R."/>
            <person name="Covacci A."/>
            <person name="Mitchell T.J."/>
            <person name="Bentley S.D."/>
            <person name="Kilian M."/>
            <person name="Ehrlich G.D."/>
            <person name="Rappuoli R."/>
            <person name="Moxon E.R."/>
            <person name="Masignani V."/>
        </authorList>
    </citation>
    <scope>NUCLEOTIDE SEQUENCE [LARGE SCALE GENOMIC DNA]</scope>
    <source>
        <strain>P1031</strain>
    </source>
</reference>
<sequence>MIVGHGIDIEELASIESAVTRHEGFAKRVLTAQEMERFTSLKGRRQIEYLAGRWSAKEAFSKAMGTGISKLGFQDLEVLNNERGAPYFSQAPFSGKIWLSISHTDQFVTASVILEENHES</sequence>
<organism>
    <name type="scientific">Streptococcus pneumoniae (strain P1031)</name>
    <dbReference type="NCBI Taxonomy" id="488223"/>
    <lineage>
        <taxon>Bacteria</taxon>
        <taxon>Bacillati</taxon>
        <taxon>Bacillota</taxon>
        <taxon>Bacilli</taxon>
        <taxon>Lactobacillales</taxon>
        <taxon>Streptococcaceae</taxon>
        <taxon>Streptococcus</taxon>
    </lineage>
</organism>
<dbReference type="EC" id="2.7.8.7" evidence="1"/>
<dbReference type="EMBL" id="CP000920">
    <property type="protein sequence ID" value="ACO21485.1"/>
    <property type="molecule type" value="Genomic_DNA"/>
</dbReference>
<dbReference type="RefSeq" id="WP_000635008.1">
    <property type="nucleotide sequence ID" value="NC_012467.1"/>
</dbReference>
<dbReference type="SMR" id="C1CM35"/>
<dbReference type="KEGG" id="spp:SPP_1715"/>
<dbReference type="HOGENOM" id="CLU_089696_1_2_9"/>
<dbReference type="GO" id="GO:0005829">
    <property type="term" value="C:cytosol"/>
    <property type="evidence" value="ECO:0007669"/>
    <property type="project" value="TreeGrafter"/>
</dbReference>
<dbReference type="GO" id="GO:0008897">
    <property type="term" value="F:holo-[acyl-carrier-protein] synthase activity"/>
    <property type="evidence" value="ECO:0007669"/>
    <property type="project" value="UniProtKB-UniRule"/>
</dbReference>
<dbReference type="GO" id="GO:0000287">
    <property type="term" value="F:magnesium ion binding"/>
    <property type="evidence" value="ECO:0007669"/>
    <property type="project" value="UniProtKB-UniRule"/>
</dbReference>
<dbReference type="GO" id="GO:0006633">
    <property type="term" value="P:fatty acid biosynthetic process"/>
    <property type="evidence" value="ECO:0007669"/>
    <property type="project" value="UniProtKB-UniRule"/>
</dbReference>
<dbReference type="GO" id="GO:0019878">
    <property type="term" value="P:lysine biosynthetic process via aminoadipic acid"/>
    <property type="evidence" value="ECO:0007669"/>
    <property type="project" value="TreeGrafter"/>
</dbReference>
<dbReference type="Gene3D" id="3.90.470.20">
    <property type="entry name" value="4'-phosphopantetheinyl transferase domain"/>
    <property type="match status" value="1"/>
</dbReference>
<dbReference type="HAMAP" id="MF_00101">
    <property type="entry name" value="AcpS"/>
    <property type="match status" value="1"/>
</dbReference>
<dbReference type="InterPro" id="IPR008278">
    <property type="entry name" value="4-PPantetheinyl_Trfase_dom"/>
</dbReference>
<dbReference type="InterPro" id="IPR037143">
    <property type="entry name" value="4-PPantetheinyl_Trfase_dom_sf"/>
</dbReference>
<dbReference type="InterPro" id="IPR002582">
    <property type="entry name" value="ACPS"/>
</dbReference>
<dbReference type="InterPro" id="IPR050559">
    <property type="entry name" value="P-Pant_transferase_sf"/>
</dbReference>
<dbReference type="InterPro" id="IPR004568">
    <property type="entry name" value="Ppantetheine-prot_Trfase_dom"/>
</dbReference>
<dbReference type="NCBIfam" id="TIGR00516">
    <property type="entry name" value="acpS"/>
    <property type="match status" value="1"/>
</dbReference>
<dbReference type="NCBIfam" id="TIGR00556">
    <property type="entry name" value="pantethn_trn"/>
    <property type="match status" value="1"/>
</dbReference>
<dbReference type="PANTHER" id="PTHR12215:SF10">
    <property type="entry name" value="L-AMINOADIPATE-SEMIALDEHYDE DEHYDROGENASE-PHOSPHOPANTETHEINYL TRANSFERASE"/>
    <property type="match status" value="1"/>
</dbReference>
<dbReference type="PANTHER" id="PTHR12215">
    <property type="entry name" value="PHOSPHOPANTETHEINE TRANSFERASE"/>
    <property type="match status" value="1"/>
</dbReference>
<dbReference type="Pfam" id="PF01648">
    <property type="entry name" value="ACPS"/>
    <property type="match status" value="1"/>
</dbReference>
<dbReference type="SUPFAM" id="SSF56214">
    <property type="entry name" value="4'-phosphopantetheinyl transferase"/>
    <property type="match status" value="1"/>
</dbReference>
<keyword id="KW-0963">Cytoplasm</keyword>
<keyword id="KW-0275">Fatty acid biosynthesis</keyword>
<keyword id="KW-0276">Fatty acid metabolism</keyword>
<keyword id="KW-0444">Lipid biosynthesis</keyword>
<keyword id="KW-0443">Lipid metabolism</keyword>
<keyword id="KW-0460">Magnesium</keyword>
<keyword id="KW-0479">Metal-binding</keyword>
<keyword id="KW-0808">Transferase</keyword>
<accession>C1CM35</accession>
<protein>
    <recommendedName>
        <fullName evidence="1">Holo-[acyl-carrier-protein] synthase</fullName>
        <shortName evidence="1">Holo-ACP synthase</shortName>
        <ecNumber evidence="1">2.7.8.7</ecNumber>
    </recommendedName>
    <alternativeName>
        <fullName evidence="1">4'-phosphopantetheinyl transferase AcpS</fullName>
    </alternativeName>
</protein>
<proteinExistence type="inferred from homology"/>
<gene>
    <name evidence="1" type="primary">acpS</name>
    <name type="ordered locus">SPP_1715</name>
</gene>